<accession>A9N5B6</accession>
<name>AIS_SALPB</name>
<protein>
    <recommendedName>
        <fullName evidence="1">Lipopolysaccharide core heptose(II)-phosphate phosphatase</fullName>
        <ecNumber evidence="1">3.1.3.-</ecNumber>
    </recommendedName>
</protein>
<sequence>MLAFTLRFIKNKRYFAILAGALVIIAGLTSQHAWSGNGLPQINGKALAALAKQHPVVVLFRHAERCDRSDNTCLSDSTGITVKGAQDARALGKAFSADIQNYNLYSSNTVRTIQSATWFSAGRSLTVDKKMMDCGSGIYASINTLLKKSQNKNIVIFTHNHCLTYIAKNKRGVKFDPDYLNALVMHAENGKLFLDGEFVPG</sequence>
<dbReference type="EC" id="3.1.3.-" evidence="1"/>
<dbReference type="EMBL" id="CP000886">
    <property type="protein sequence ID" value="ABX66112.1"/>
    <property type="molecule type" value="Genomic_DNA"/>
</dbReference>
<dbReference type="SMR" id="A9N5B6"/>
<dbReference type="KEGG" id="spq:SPAB_00686"/>
<dbReference type="PATRIC" id="fig|1016998.12.peg.646"/>
<dbReference type="HOGENOM" id="CLU_106705_1_0_6"/>
<dbReference type="BioCyc" id="SENT1016998:SPAB_RS02855-MONOMER"/>
<dbReference type="UniPathway" id="UPA00451"/>
<dbReference type="Proteomes" id="UP000008556">
    <property type="component" value="Chromosome"/>
</dbReference>
<dbReference type="GO" id="GO:0042597">
    <property type="term" value="C:periplasmic space"/>
    <property type="evidence" value="ECO:0007669"/>
    <property type="project" value="UniProtKB-SubCell"/>
</dbReference>
<dbReference type="GO" id="GO:0016791">
    <property type="term" value="F:phosphatase activity"/>
    <property type="evidence" value="ECO:0007669"/>
    <property type="project" value="UniProtKB-UniRule"/>
</dbReference>
<dbReference type="GO" id="GO:0008653">
    <property type="term" value="P:lipopolysaccharide metabolic process"/>
    <property type="evidence" value="ECO:0007669"/>
    <property type="project" value="UniProtKB-UniRule"/>
</dbReference>
<dbReference type="CDD" id="cd07040">
    <property type="entry name" value="HP"/>
    <property type="match status" value="1"/>
</dbReference>
<dbReference type="Gene3D" id="3.40.50.1240">
    <property type="entry name" value="Phosphoglycerate mutase-like"/>
    <property type="match status" value="1"/>
</dbReference>
<dbReference type="HAMAP" id="MF_01868">
    <property type="entry name" value="Ais"/>
    <property type="match status" value="1"/>
</dbReference>
<dbReference type="InterPro" id="IPR013078">
    <property type="entry name" value="His_Pase_superF_clade-1"/>
</dbReference>
<dbReference type="InterPro" id="IPR029033">
    <property type="entry name" value="His_PPase_superfam"/>
</dbReference>
<dbReference type="InterPro" id="IPR011310">
    <property type="entry name" value="LipoPS_heptP_Pase"/>
</dbReference>
<dbReference type="NCBIfam" id="NF011945">
    <property type="entry name" value="PRK15416.1"/>
    <property type="match status" value="1"/>
</dbReference>
<dbReference type="Pfam" id="PF00300">
    <property type="entry name" value="His_Phos_1"/>
    <property type="match status" value="1"/>
</dbReference>
<dbReference type="PIRSF" id="PIRSF011416">
    <property type="entry name" value="Ais-TraG-AfrS"/>
    <property type="match status" value="1"/>
</dbReference>
<dbReference type="SUPFAM" id="SSF53254">
    <property type="entry name" value="Phosphoglycerate mutase-like"/>
    <property type="match status" value="1"/>
</dbReference>
<evidence type="ECO:0000255" key="1">
    <source>
        <dbReference type="HAMAP-Rule" id="MF_01868"/>
    </source>
</evidence>
<proteinExistence type="inferred from homology"/>
<reference key="1">
    <citation type="submission" date="2007-11" db="EMBL/GenBank/DDBJ databases">
        <authorList>
            <consortium name="The Salmonella enterica serovar Paratyphi B Genome Sequencing Project"/>
            <person name="McClelland M."/>
            <person name="Sanderson E.K."/>
            <person name="Porwollik S."/>
            <person name="Spieth J."/>
            <person name="Clifton W.S."/>
            <person name="Fulton R."/>
            <person name="Cordes M."/>
            <person name="Wollam A."/>
            <person name="Shah N."/>
            <person name="Pepin K."/>
            <person name="Bhonagiri V."/>
            <person name="Nash W."/>
            <person name="Johnson M."/>
            <person name="Thiruvilangam P."/>
            <person name="Wilson R."/>
        </authorList>
    </citation>
    <scope>NUCLEOTIDE SEQUENCE [LARGE SCALE GENOMIC DNA]</scope>
    <source>
        <strain>ATCC BAA-1250 / SPB7</strain>
    </source>
</reference>
<keyword id="KW-0378">Hydrolase</keyword>
<keyword id="KW-0574">Periplasm</keyword>
<keyword id="KW-0732">Signal</keyword>
<comment type="function">
    <text evidence="1">Catalyzes the dephosphorylation of heptose(II) of the outer membrane lipopolysaccharide core.</text>
</comment>
<comment type="pathway">
    <text evidence="1">Bacterial outer membrane biogenesis; lipopolysaccharide metabolism.</text>
</comment>
<comment type="subcellular location">
    <subcellularLocation>
        <location evidence="1">Periplasm</location>
    </subcellularLocation>
</comment>
<comment type="similarity">
    <text evidence="1">Belongs to the phosphoglycerate mutase family. Ais subfamily.</text>
</comment>
<gene>
    <name evidence="1" type="primary">ais</name>
    <name type="ordered locus">SPAB_00686</name>
</gene>
<organism>
    <name type="scientific">Salmonella paratyphi B (strain ATCC BAA-1250 / SPB7)</name>
    <dbReference type="NCBI Taxonomy" id="1016998"/>
    <lineage>
        <taxon>Bacteria</taxon>
        <taxon>Pseudomonadati</taxon>
        <taxon>Pseudomonadota</taxon>
        <taxon>Gammaproteobacteria</taxon>
        <taxon>Enterobacterales</taxon>
        <taxon>Enterobacteriaceae</taxon>
        <taxon>Salmonella</taxon>
    </lineage>
</organism>
<feature type="signal peptide" evidence="1">
    <location>
        <begin position="1"/>
        <end position="35"/>
    </location>
</feature>
<feature type="chain" id="PRO_0000380582" description="Lipopolysaccharide core heptose(II)-phosphate phosphatase">
    <location>
        <begin position="36"/>
        <end position="201"/>
    </location>
</feature>